<comment type="function">
    <text>Component of the Mediator complex, a coactivator involved in the regulated transcription of nearly all RNA polymerase II-dependent genes. Mediator functions as a bridge to convey information from gene-specific regulatory proteins to the basal RNA polymerase II transcription machinery. Mediator is recruited to promoters by direct interactions with regulatory proteins and serves as a scaffold for the assembly of a functional preinitiation complex with RNA polymerase II and the general transcription factors.</text>
</comment>
<comment type="subunit">
    <text evidence="2 3 4">Component of the Mediator complex, which is composed of MED1, MED4, MED6, MED7, MED8, MED9, MED10, MED11, MED12, MED13, MED13L, MED14, MED15, MED16, MED17, MED18, MED19, MED20, MED21, MED22, MED23, MED24, MED25, MED26, MED27, MED29, MED30, MED31, CCNC, CDK8 and CDC2L6/CDK11. The MED12, MED13, CCNC and CDK8 subunits form a distinct module termed the CDK8 module. Mediator containing the CDK8 module is less active than Mediator lacking this module in supporting transcriptional activation. Individual preparations of the Mediator complex lacking one or more distinct subunits have been variously termed ARC, CRSP, DRIP, PC2, SMCC and TRAP.</text>
</comment>
<comment type="interaction">
    <interactant intactId="EBI-394632">
        <id>O43513</id>
    </interactant>
    <interactant intactId="EBI-306905">
        <id>Q9Y376</id>
        <label>CAB39</label>
    </interactant>
    <organismsDiffer>false</organismsDiffer>
    <experiments>3</experiments>
</comment>
<comment type="interaction">
    <interactant intactId="EBI-394632">
        <id>O43513</id>
    </interactant>
    <interactant intactId="EBI-16429135">
        <id>A0A0S2Z4Q4</id>
        <label>HGS</label>
    </interactant>
    <organismsDiffer>false</organismsDiffer>
    <experiments>3</experiments>
</comment>
<comment type="interaction">
    <interactant intactId="EBI-394632">
        <id>O43513</id>
    </interactant>
    <interactant intactId="EBI-740220">
        <id>O14964</id>
        <label>HGS</label>
    </interactant>
    <organismsDiffer>false</organismsDiffer>
    <experiments>4</experiments>
</comment>
<comment type="interaction">
    <interactant intactId="EBI-394632">
        <id>O43513</id>
    </interactant>
    <interactant intactId="EBI-394459">
        <id>Q15648</id>
        <label>MED1</label>
    </interactant>
    <organismsDiffer>false</organismsDiffer>
    <experiments>8</experiments>
</comment>
<comment type="interaction">
    <interactant intactId="EBI-394632">
        <id>O43513</id>
    </interactant>
    <interactant intactId="EBI-394354">
        <id>Q9BTT4</id>
        <label>MED10</label>
    </interactant>
    <organismsDiffer>false</organismsDiffer>
    <experiments>10</experiments>
</comment>
<comment type="interaction">
    <interactant intactId="EBI-394632">
        <id>O43513</id>
    </interactant>
    <interactant intactId="EBI-394678">
        <id>Q13503</id>
        <label>MED21</label>
    </interactant>
    <organismsDiffer>false</organismsDiffer>
    <experiments>7</experiments>
</comment>
<comment type="interaction">
    <interactant intactId="EBI-394632">
        <id>O43513</id>
    </interactant>
    <interactant intactId="EBI-394392">
        <id>O95402</id>
        <label>MED26</label>
    </interactant>
    <organismsDiffer>false</organismsDiffer>
    <experiments>10</experiments>
</comment>
<comment type="interaction">
    <interactant intactId="EBI-394632">
        <id>O43513</id>
    </interactant>
    <interactant intactId="EBI-394707">
        <id>Q9Y3C7</id>
        <label>MED31</label>
    </interactant>
    <organismsDiffer>false</organismsDiffer>
    <experiments>6</experiments>
</comment>
<comment type="interaction">
    <interactant intactId="EBI-394632">
        <id>O43513</id>
    </interactant>
    <interactant intactId="EBI-9676086">
        <id>P03383</id>
        <label>env</label>
    </interactant>
    <organismsDiffer>true</organismsDiffer>
    <experiments>3</experiments>
</comment>
<comment type="subcellular location">
    <subcellularLocation>
        <location>Nucleus</location>
    </subcellularLocation>
</comment>
<comment type="PTM">
    <text evidence="5">Constitutively sumoylated.</text>
</comment>
<comment type="similarity">
    <text evidence="6">Belongs to the Mediator complex subunit 7 family.</text>
</comment>
<reference key="1">
    <citation type="journal article" date="1998" name="Proc. Natl. Acad. Sci. U.S.A.">
        <title>Mammalian mediator of transcriptional regulation and its possible role as an end-point of signal transduction pathways.</title>
        <authorList>
            <person name="Jiang Y.W."/>
            <person name="Veschambre P."/>
            <person name="Erdjument-Bromage H."/>
            <person name="Tempst P."/>
            <person name="Conaway J.W."/>
            <person name="Conaway R.C."/>
            <person name="Kornberg R.D."/>
        </authorList>
    </citation>
    <scope>NUCLEOTIDE SEQUENCE [MRNA]</scope>
</reference>
<reference key="2">
    <citation type="journal article" date="1999" name="Nature">
        <title>The transcriptional cofactor complex CRSP is required for activity of the enhancer-binding protein Sp1.</title>
        <authorList>
            <person name="Ryu S."/>
            <person name="Zhou S."/>
            <person name="Ladurner A.G."/>
            <person name="Tjian R."/>
        </authorList>
    </citation>
    <scope>NUCLEOTIDE SEQUENCE [MRNA]</scope>
</reference>
<reference key="3">
    <citation type="journal article" date="2004" name="Genome Res.">
        <title>The status, quality, and expansion of the NIH full-length cDNA project: the Mammalian Gene Collection (MGC).</title>
        <authorList>
            <consortium name="The MGC Project Team"/>
        </authorList>
    </citation>
    <scope>NUCLEOTIDE SEQUENCE [LARGE SCALE MRNA]</scope>
    <source>
        <tissue>Urinary bladder</tissue>
    </source>
</reference>
<reference key="4">
    <citation type="journal article" date="1999" name="Nature">
        <title>Composite co-activator ARC mediates chromatin-directed transcriptional activation.</title>
        <authorList>
            <person name="Naeaer A.M."/>
            <person name="Beaurang P.A."/>
            <person name="Zhou S."/>
            <person name="Abraham S."/>
            <person name="Solomon W.B."/>
            <person name="Tjian R."/>
        </authorList>
    </citation>
    <scope>IDENTIFICATION IN ARC COMPLEX</scope>
    <scope>PROTEIN SEQUENCE OF 19-29 AND 212-222</scope>
</reference>
<reference key="5">
    <citation type="journal article" date="2004" name="Mol. Cell">
        <title>A set of consensus mammalian mediator subunits identified by multidimensional protein identification technology.</title>
        <authorList>
            <person name="Sato S."/>
            <person name="Tomomori-Sato C."/>
            <person name="Parmely T.J."/>
            <person name="Florens L."/>
            <person name="Zybailov B."/>
            <person name="Swanson S.K."/>
            <person name="Banks C.A.S."/>
            <person name="Jin J."/>
            <person name="Cai Y."/>
            <person name="Washburn M.P."/>
            <person name="Conaway J.W."/>
            <person name="Conaway R.C."/>
        </authorList>
    </citation>
    <scope>IDENTIFICATION BY MASS SPECTROMETRY</scope>
    <scope>IDENTIFICATION IN THE MEDIATOR COMPLEX</scope>
</reference>
<reference key="6">
    <citation type="journal article" date="2005" name="Mol. Cell">
        <title>MED1/TRAP220 exists predominantly in a TRAP/Mediator subpopulation enriched in RNA polymerase II and is required for ER-mediated transcription.</title>
        <authorList>
            <person name="Zhang X."/>
            <person name="Krutchinsky A."/>
            <person name="Fukuda A."/>
            <person name="Chen W."/>
            <person name="Yamamura S."/>
            <person name="Chait B.T."/>
            <person name="Roeder R.G."/>
        </authorList>
    </citation>
    <scope>IDENTIFICATION BY MASS SPECTROMETRY</scope>
    <scope>IDENTIFICATION IN THE MEDIATOR COMPLEX</scope>
    <scope>ASSOCIATION OF THE MEDIATOR COMPLEX WITH RNA POLYMERASE II</scope>
</reference>
<reference key="7">
    <citation type="journal article" date="2007" name="Nucleic Acids Res.">
        <title>Ubc9 fusion-directed SUMOylation identifies constitutive and inducible SUMOylation.</title>
        <authorList>
            <person name="Jakobs A."/>
            <person name="Himstedt F."/>
            <person name="Funk M."/>
            <person name="Korn B."/>
            <person name="Gaestel M."/>
            <person name="Niedenthal R."/>
        </authorList>
    </citation>
    <scope>SUMOYLATION</scope>
</reference>
<reference key="8">
    <citation type="journal article" date="2009" name="Mol. Cell. Proteomics">
        <title>Large-scale proteomics analysis of the human kinome.</title>
        <authorList>
            <person name="Oppermann F.S."/>
            <person name="Gnad F."/>
            <person name="Olsen J.V."/>
            <person name="Hornberger R."/>
            <person name="Greff Z."/>
            <person name="Keri G."/>
            <person name="Mann M."/>
            <person name="Daub H."/>
        </authorList>
    </citation>
    <scope>PHOSPHORYLATION [LARGE SCALE ANALYSIS] AT SER-194</scope>
    <scope>IDENTIFICATION BY MASS SPECTROMETRY [LARGE SCALE ANALYSIS]</scope>
</reference>
<reference key="9">
    <citation type="journal article" date="2014" name="Nat. Struct. Mol. Biol.">
        <title>Uncovering global SUMOylation signaling networks in a site-specific manner.</title>
        <authorList>
            <person name="Hendriks I.A."/>
            <person name="D'Souza R.C."/>
            <person name="Yang B."/>
            <person name="Verlaan-de Vries M."/>
            <person name="Mann M."/>
            <person name="Vertegaal A.C."/>
        </authorList>
    </citation>
    <scope>SUMOYLATION [LARGE SCALE ANALYSIS] AT LYS-185</scope>
    <scope>IDENTIFICATION BY MASS SPECTROMETRY [LARGE SCALE ANALYSIS]</scope>
</reference>
<reference key="10">
    <citation type="journal article" date="2014" name="Proc. Natl. Acad. Sci. U.S.A.">
        <title>Mapping of SUMO sites and analysis of SUMOylation changes induced by external stimuli.</title>
        <authorList>
            <person name="Impens F."/>
            <person name="Radoshevich L."/>
            <person name="Cossart P."/>
            <person name="Ribet D."/>
        </authorList>
    </citation>
    <scope>SUMOYLATION [LARGE SCALE ANALYSIS] AT LYS-185</scope>
    <scope>IDENTIFICATION BY MASS SPECTROMETRY [LARGE SCALE ANALYSIS]</scope>
</reference>
<reference key="11">
    <citation type="journal article" date="2015" name="Cell Rep.">
        <title>SUMO-2 orchestrates chromatin modifiers in response to DNA damage.</title>
        <authorList>
            <person name="Hendriks I.A."/>
            <person name="Treffers L.W."/>
            <person name="Verlaan-de Vries M."/>
            <person name="Olsen J.V."/>
            <person name="Vertegaal A.C."/>
        </authorList>
    </citation>
    <scope>SUMOYLATION [LARGE SCALE ANALYSIS] AT LYS-185</scope>
    <scope>IDENTIFICATION BY MASS SPECTROMETRY [LARGE SCALE ANALYSIS]</scope>
</reference>
<reference key="12">
    <citation type="journal article" date="2015" name="Mol. Cell. Proteomics">
        <title>System-wide analysis of SUMOylation dynamics in response to replication stress reveals novel small ubiquitin-like modified target proteins and acceptor lysines relevant for genome stability.</title>
        <authorList>
            <person name="Xiao Z."/>
            <person name="Chang J.G."/>
            <person name="Hendriks I.A."/>
            <person name="Sigurdsson J.O."/>
            <person name="Olsen J.V."/>
            <person name="Vertegaal A.C."/>
        </authorList>
    </citation>
    <scope>SUMOYLATION [LARGE SCALE ANALYSIS] AT LYS-185</scope>
    <scope>IDENTIFICATION BY MASS SPECTROMETRY [LARGE SCALE ANALYSIS]</scope>
</reference>
<reference key="13">
    <citation type="journal article" date="2017" name="Nat. Struct. Mol. Biol.">
        <title>Site-specific mapping of the human SUMO proteome reveals co-modification with phosphorylation.</title>
        <authorList>
            <person name="Hendriks I.A."/>
            <person name="Lyon D."/>
            <person name="Young C."/>
            <person name="Jensen L.J."/>
            <person name="Vertegaal A.C."/>
            <person name="Nielsen M.L."/>
        </authorList>
    </citation>
    <scope>SUMOYLATION [LARGE SCALE ANALYSIS] AT LYS-185</scope>
    <scope>IDENTIFICATION BY MASS SPECTROMETRY [LARGE SCALE ANALYSIS]</scope>
</reference>
<feature type="chain" id="PRO_0000079408" description="Mediator of RNA polymerase II transcription subunit 7">
    <location>
        <begin position="1"/>
        <end position="233"/>
    </location>
</feature>
<feature type="region of interest" description="Disordered" evidence="1">
    <location>
        <begin position="187"/>
        <end position="213"/>
    </location>
</feature>
<feature type="compositionally biased region" description="Basic and acidic residues" evidence="1">
    <location>
        <begin position="202"/>
        <end position="213"/>
    </location>
</feature>
<feature type="modified residue" description="Phosphoserine" evidence="7">
    <location>
        <position position="194"/>
    </location>
</feature>
<feature type="cross-link" description="Glycyl lysine isopeptide (Lys-Gly) (interchain with G-Cter in SUMO1); alternate" evidence="8">
    <location>
        <position position="185"/>
    </location>
</feature>
<feature type="cross-link" description="Glycyl lysine isopeptide (Lys-Gly) (interchain with G-Cter in SUMO2); alternate" evidence="9 10 11 12">
    <location>
        <position position="185"/>
    </location>
</feature>
<feature type="helix" evidence="13">
    <location>
        <begin position="19"/>
        <end position="25"/>
    </location>
</feature>
<feature type="strand" evidence="13">
    <location>
        <begin position="46"/>
        <end position="48"/>
    </location>
</feature>
<feature type="turn" evidence="13">
    <location>
        <begin position="60"/>
        <end position="63"/>
    </location>
</feature>
<feature type="helix" evidence="13">
    <location>
        <begin position="74"/>
        <end position="98"/>
    </location>
</feature>
<feature type="helix" evidence="13">
    <location>
        <begin position="104"/>
        <end position="124"/>
    </location>
</feature>
<feature type="helix" evidence="13">
    <location>
        <begin position="126"/>
        <end position="174"/>
    </location>
</feature>
<protein>
    <recommendedName>
        <fullName>Mediator of RNA polymerase II transcription subunit 7</fullName>
        <shortName>hMED7</shortName>
    </recommendedName>
    <alternativeName>
        <fullName>Activator-recruited cofactor 34 kDa component</fullName>
        <shortName>ARC34</shortName>
    </alternativeName>
    <alternativeName>
        <fullName>Cofactor required for Sp1 transcriptional activation subunit 9</fullName>
        <shortName>CRSP complex subunit 9</shortName>
    </alternativeName>
    <alternativeName>
        <fullName>Mediator complex subunit 7</fullName>
    </alternativeName>
    <alternativeName>
        <fullName>RNA polymerase transcriptional regulation mediator subunit 7 homolog</fullName>
    </alternativeName>
    <alternativeName>
        <fullName>Transcriptional coactivator CRSP33</fullName>
    </alternativeName>
</protein>
<proteinExistence type="evidence at protein level"/>
<organism>
    <name type="scientific">Homo sapiens</name>
    <name type="common">Human</name>
    <dbReference type="NCBI Taxonomy" id="9606"/>
    <lineage>
        <taxon>Eukaryota</taxon>
        <taxon>Metazoa</taxon>
        <taxon>Chordata</taxon>
        <taxon>Craniata</taxon>
        <taxon>Vertebrata</taxon>
        <taxon>Euteleostomi</taxon>
        <taxon>Mammalia</taxon>
        <taxon>Eutheria</taxon>
        <taxon>Euarchontoglires</taxon>
        <taxon>Primates</taxon>
        <taxon>Haplorrhini</taxon>
        <taxon>Catarrhini</taxon>
        <taxon>Hominidae</taxon>
        <taxon>Homo</taxon>
    </lineage>
</organism>
<accession>O43513</accession>
<dbReference type="EMBL" id="AF031383">
    <property type="protein sequence ID" value="AAC52115.1"/>
    <property type="molecule type" value="mRNA"/>
</dbReference>
<dbReference type="EMBL" id="AF104251">
    <property type="protein sequence ID" value="AAD12720.1"/>
    <property type="molecule type" value="mRNA"/>
</dbReference>
<dbReference type="EMBL" id="BC005250">
    <property type="status" value="NOT_ANNOTATED_CDS"/>
    <property type="molecule type" value="mRNA"/>
</dbReference>
<dbReference type="CCDS" id="CCDS4334.1"/>
<dbReference type="RefSeq" id="NP_001094286.1">
    <property type="nucleotide sequence ID" value="NM_001100816.1"/>
</dbReference>
<dbReference type="RefSeq" id="NP_004261.1">
    <property type="nucleotide sequence ID" value="NM_004270.5"/>
</dbReference>
<dbReference type="PDB" id="7EMF">
    <property type="method" value="EM"/>
    <property type="resolution" value="3.50 A"/>
    <property type="chains" value="G=1-233"/>
</dbReference>
<dbReference type="PDB" id="7ENA">
    <property type="method" value="EM"/>
    <property type="resolution" value="4.07 A"/>
    <property type="chains" value="g=1-233"/>
</dbReference>
<dbReference type="PDB" id="7ENC">
    <property type="method" value="EM"/>
    <property type="resolution" value="4.13 A"/>
    <property type="chains" value="g=1-233"/>
</dbReference>
<dbReference type="PDB" id="7ENJ">
    <property type="method" value="EM"/>
    <property type="resolution" value="4.40 A"/>
    <property type="chains" value="G=1-233"/>
</dbReference>
<dbReference type="PDB" id="7LBM">
    <property type="method" value="EM"/>
    <property type="resolution" value="4.80 A"/>
    <property type="chains" value="t=1-233"/>
</dbReference>
<dbReference type="PDB" id="7NVR">
    <property type="method" value="EM"/>
    <property type="resolution" value="4.50 A"/>
    <property type="chains" value="i=1-233"/>
</dbReference>
<dbReference type="PDB" id="8GXQ">
    <property type="method" value="EM"/>
    <property type="resolution" value="5.04 A"/>
    <property type="chains" value="g=1-233"/>
</dbReference>
<dbReference type="PDB" id="8GXS">
    <property type="method" value="EM"/>
    <property type="resolution" value="4.16 A"/>
    <property type="chains" value="g=1-233"/>
</dbReference>
<dbReference type="PDB" id="8T9D">
    <property type="method" value="EM"/>
    <property type="resolution" value="4.66 A"/>
    <property type="chains" value="D=1-233"/>
</dbReference>
<dbReference type="PDB" id="8TQW">
    <property type="method" value="EM"/>
    <property type="resolution" value="8.20 A"/>
    <property type="chains" value="G=1-233"/>
</dbReference>
<dbReference type="PDB" id="8TRH">
    <property type="method" value="EM"/>
    <property type="resolution" value="3.70 A"/>
    <property type="chains" value="G=1-233"/>
</dbReference>
<dbReference type="PDBsum" id="7EMF"/>
<dbReference type="PDBsum" id="7ENA"/>
<dbReference type="PDBsum" id="7ENC"/>
<dbReference type="PDBsum" id="7ENJ"/>
<dbReference type="PDBsum" id="7LBM"/>
<dbReference type="PDBsum" id="7NVR"/>
<dbReference type="PDBsum" id="8GXQ"/>
<dbReference type="PDBsum" id="8GXS"/>
<dbReference type="PDBsum" id="8T9D"/>
<dbReference type="PDBsum" id="8TQW"/>
<dbReference type="PDBsum" id="8TRH"/>
<dbReference type="EMDB" id="EMD-12610"/>
<dbReference type="EMDB" id="EMD-23255"/>
<dbReference type="EMDB" id="EMD-31191"/>
<dbReference type="EMDB" id="EMD-31204"/>
<dbReference type="EMDB" id="EMD-31207"/>
<dbReference type="EMDB" id="EMD-31211"/>
<dbReference type="EMDB" id="EMD-34359"/>
<dbReference type="EMDB" id="EMD-34360"/>
<dbReference type="EMDB" id="EMD-41107"/>
<dbReference type="EMDB" id="EMD-41565"/>
<dbReference type="EMDB" id="EMD-41580"/>
<dbReference type="SMR" id="O43513"/>
<dbReference type="BioGRID" id="114833">
    <property type="interactions" value="93"/>
</dbReference>
<dbReference type="ComplexPortal" id="CPX-3227">
    <property type="entry name" value="Core mediator complex"/>
</dbReference>
<dbReference type="CORUM" id="O43513"/>
<dbReference type="FunCoup" id="O43513">
    <property type="interactions" value="2398"/>
</dbReference>
<dbReference type="IntAct" id="O43513">
    <property type="interactions" value="67"/>
</dbReference>
<dbReference type="MINT" id="O43513"/>
<dbReference type="STRING" id="9606.ENSP00000286317"/>
<dbReference type="iPTMnet" id="O43513"/>
<dbReference type="PhosphoSitePlus" id="O43513"/>
<dbReference type="BioMuta" id="MED7"/>
<dbReference type="jPOST" id="O43513"/>
<dbReference type="MassIVE" id="O43513"/>
<dbReference type="PaxDb" id="9606-ENSP00000286317"/>
<dbReference type="PeptideAtlas" id="O43513"/>
<dbReference type="ProteomicsDB" id="49002"/>
<dbReference type="Pumba" id="O43513"/>
<dbReference type="Antibodypedia" id="16528">
    <property type="antibodies" value="253 antibodies from 27 providers"/>
</dbReference>
<dbReference type="DNASU" id="9443"/>
<dbReference type="Ensembl" id="ENST00000286317.6">
    <property type="protein sequence ID" value="ENSP00000286317.5"/>
    <property type="gene ID" value="ENSG00000155868.8"/>
</dbReference>
<dbReference type="Ensembl" id="ENST00000420343.1">
    <property type="protein sequence ID" value="ENSP00000401046.1"/>
    <property type="gene ID" value="ENSG00000155868.8"/>
</dbReference>
<dbReference type="GeneID" id="9443"/>
<dbReference type="KEGG" id="hsa:9443"/>
<dbReference type="MANE-Select" id="ENST00000286317.6">
    <property type="protein sequence ID" value="ENSP00000286317.5"/>
    <property type="RefSeq nucleotide sequence ID" value="NM_004270.5"/>
    <property type="RefSeq protein sequence ID" value="NP_004261.1"/>
</dbReference>
<dbReference type="AGR" id="HGNC:2378"/>
<dbReference type="CTD" id="9443"/>
<dbReference type="DisGeNET" id="9443"/>
<dbReference type="GeneCards" id="MED7"/>
<dbReference type="HGNC" id="HGNC:2378">
    <property type="gene designation" value="MED7"/>
</dbReference>
<dbReference type="HPA" id="ENSG00000155868">
    <property type="expression patterns" value="Low tissue specificity"/>
</dbReference>
<dbReference type="MIM" id="605045">
    <property type="type" value="gene"/>
</dbReference>
<dbReference type="neXtProt" id="NX_O43513"/>
<dbReference type="OpenTargets" id="ENSG00000155868"/>
<dbReference type="PharmGKB" id="PA162395669"/>
<dbReference type="VEuPathDB" id="HostDB:ENSG00000155868"/>
<dbReference type="eggNOG" id="KOG0570">
    <property type="taxonomic scope" value="Eukaryota"/>
</dbReference>
<dbReference type="GeneTree" id="ENSGT00940000154444"/>
<dbReference type="InParanoid" id="O43513"/>
<dbReference type="OMA" id="IHDSYSM"/>
<dbReference type="OrthoDB" id="10253553at2759"/>
<dbReference type="PAN-GO" id="O43513">
    <property type="GO annotations" value="2 GO annotations based on evolutionary models"/>
</dbReference>
<dbReference type="PhylomeDB" id="O43513"/>
<dbReference type="TreeFam" id="TF314411"/>
<dbReference type="PathwayCommons" id="O43513"/>
<dbReference type="Reactome" id="R-HSA-1989781">
    <property type="pathway name" value="PPARA activates gene expression"/>
</dbReference>
<dbReference type="Reactome" id="R-HSA-212436">
    <property type="pathway name" value="Generic Transcription Pathway"/>
</dbReference>
<dbReference type="Reactome" id="R-HSA-381340">
    <property type="pathway name" value="Transcriptional regulation of white adipocyte differentiation"/>
</dbReference>
<dbReference type="Reactome" id="R-HSA-9833110">
    <property type="pathway name" value="RSV-host interactions"/>
</dbReference>
<dbReference type="Reactome" id="R-HSA-9841922">
    <property type="pathway name" value="MLL4 and MLL3 complexes regulate expression of PPARG target genes in adipogenesis and hepatic steatosis"/>
</dbReference>
<dbReference type="SignaLink" id="O43513"/>
<dbReference type="SIGNOR" id="O43513"/>
<dbReference type="BioGRID-ORCS" id="9443">
    <property type="hits" value="660 hits in 1177 CRISPR screens"/>
</dbReference>
<dbReference type="ChiTaRS" id="MED7">
    <property type="organism name" value="human"/>
</dbReference>
<dbReference type="GeneWiki" id="MED7"/>
<dbReference type="GenomeRNAi" id="9443"/>
<dbReference type="Pharos" id="O43513">
    <property type="development level" value="Tbio"/>
</dbReference>
<dbReference type="PRO" id="PR:O43513"/>
<dbReference type="Proteomes" id="UP000005640">
    <property type="component" value="Chromosome 5"/>
</dbReference>
<dbReference type="RNAct" id="O43513">
    <property type="molecule type" value="protein"/>
</dbReference>
<dbReference type="Bgee" id="ENSG00000155868">
    <property type="expression patterns" value="Expressed in choroid plexus epithelium and 211 other cell types or tissues"/>
</dbReference>
<dbReference type="ExpressionAtlas" id="O43513">
    <property type="expression patterns" value="baseline and differential"/>
</dbReference>
<dbReference type="GO" id="GO:0070847">
    <property type="term" value="C:core mediator complex"/>
    <property type="evidence" value="ECO:0000353"/>
    <property type="project" value="ComplexPortal"/>
</dbReference>
<dbReference type="GO" id="GO:0016592">
    <property type="term" value="C:mediator complex"/>
    <property type="evidence" value="ECO:0000318"/>
    <property type="project" value="GO_Central"/>
</dbReference>
<dbReference type="GO" id="GO:0016604">
    <property type="term" value="C:nuclear body"/>
    <property type="evidence" value="ECO:0000314"/>
    <property type="project" value="HPA"/>
</dbReference>
<dbReference type="GO" id="GO:0005654">
    <property type="term" value="C:nucleoplasm"/>
    <property type="evidence" value="ECO:0000304"/>
    <property type="project" value="Reactome"/>
</dbReference>
<dbReference type="GO" id="GO:0005634">
    <property type="term" value="C:nucleus"/>
    <property type="evidence" value="ECO:0000314"/>
    <property type="project" value="ComplexPortal"/>
</dbReference>
<dbReference type="GO" id="GO:0005667">
    <property type="term" value="C:transcription regulator complex"/>
    <property type="evidence" value="ECO:0000314"/>
    <property type="project" value="MGI"/>
</dbReference>
<dbReference type="GO" id="GO:0000151">
    <property type="term" value="C:ubiquitin ligase complex"/>
    <property type="evidence" value="ECO:0007669"/>
    <property type="project" value="Ensembl"/>
</dbReference>
<dbReference type="GO" id="GO:0003713">
    <property type="term" value="F:transcription coactivator activity"/>
    <property type="evidence" value="ECO:0000304"/>
    <property type="project" value="ProtInc"/>
</dbReference>
<dbReference type="GO" id="GO:0061630">
    <property type="term" value="F:ubiquitin protein ligase activity"/>
    <property type="evidence" value="ECO:0007669"/>
    <property type="project" value="Ensembl"/>
</dbReference>
<dbReference type="GO" id="GO:0032968">
    <property type="term" value="P:positive regulation of transcription elongation by RNA polymerase II"/>
    <property type="evidence" value="ECO:0000303"/>
    <property type="project" value="ComplexPortal"/>
</dbReference>
<dbReference type="GO" id="GO:0060261">
    <property type="term" value="P:positive regulation of transcription initiation by RNA polymerase II"/>
    <property type="evidence" value="ECO:0000303"/>
    <property type="project" value="ComplexPortal"/>
</dbReference>
<dbReference type="GO" id="GO:0016567">
    <property type="term" value="P:protein ubiquitination"/>
    <property type="evidence" value="ECO:0007669"/>
    <property type="project" value="Ensembl"/>
</dbReference>
<dbReference type="GO" id="GO:0006357">
    <property type="term" value="P:regulation of transcription by RNA polymerase II"/>
    <property type="evidence" value="ECO:0000314"/>
    <property type="project" value="MGI"/>
</dbReference>
<dbReference type="GO" id="GO:0051123">
    <property type="term" value="P:RNA polymerase II preinitiation complex assembly"/>
    <property type="evidence" value="ECO:0000303"/>
    <property type="project" value="ComplexPortal"/>
</dbReference>
<dbReference type="GO" id="GO:0035019">
    <property type="term" value="P:somatic stem cell population maintenance"/>
    <property type="evidence" value="ECO:0007669"/>
    <property type="project" value="Ensembl"/>
</dbReference>
<dbReference type="GO" id="GO:0006367">
    <property type="term" value="P:transcription initiation at RNA polymerase II promoter"/>
    <property type="evidence" value="ECO:0000304"/>
    <property type="project" value="ProtInc"/>
</dbReference>
<dbReference type="Gene3D" id="6.10.140.200">
    <property type="match status" value="1"/>
</dbReference>
<dbReference type="InterPro" id="IPR051669">
    <property type="entry name" value="Immune_Mod/Transcr_Coactivator"/>
</dbReference>
<dbReference type="InterPro" id="IPR037212">
    <property type="entry name" value="Med7/Med21-like"/>
</dbReference>
<dbReference type="InterPro" id="IPR009244">
    <property type="entry name" value="Mediatior_Med7"/>
</dbReference>
<dbReference type="InterPro" id="IPR044888">
    <property type="entry name" value="Mediatior_Med7_sf"/>
</dbReference>
<dbReference type="PANTHER" id="PTHR15498:SF72">
    <property type="entry name" value="MEDIATOR OF RNA POLYMERASE II TRANSCRIPTION SUBUNIT 7"/>
    <property type="match status" value="1"/>
</dbReference>
<dbReference type="PANTHER" id="PTHR15498">
    <property type="entry name" value="T-CELL IMMUNOGLOBULIN AND MUCIN DOMAIN CONTAINING TIM"/>
    <property type="match status" value="1"/>
</dbReference>
<dbReference type="Pfam" id="PF05983">
    <property type="entry name" value="Med7"/>
    <property type="match status" value="1"/>
</dbReference>
<dbReference type="SUPFAM" id="SSF140718">
    <property type="entry name" value="Mediator hinge subcomplex-like"/>
    <property type="match status" value="1"/>
</dbReference>
<name>MED7_HUMAN</name>
<evidence type="ECO:0000256" key="1">
    <source>
        <dbReference type="SAM" id="MobiDB-lite"/>
    </source>
</evidence>
<evidence type="ECO:0000269" key="2">
    <source>
    </source>
</evidence>
<evidence type="ECO:0000269" key="3">
    <source>
    </source>
</evidence>
<evidence type="ECO:0000269" key="4">
    <source>
    </source>
</evidence>
<evidence type="ECO:0000269" key="5">
    <source>
    </source>
</evidence>
<evidence type="ECO:0000305" key="6"/>
<evidence type="ECO:0007744" key="7">
    <source>
    </source>
</evidence>
<evidence type="ECO:0007744" key="8">
    <source>
    </source>
</evidence>
<evidence type="ECO:0007744" key="9">
    <source>
    </source>
</evidence>
<evidence type="ECO:0007744" key="10">
    <source>
    </source>
</evidence>
<evidence type="ECO:0007744" key="11">
    <source>
    </source>
</evidence>
<evidence type="ECO:0007744" key="12">
    <source>
    </source>
</evidence>
<evidence type="ECO:0007829" key="13">
    <source>
        <dbReference type="PDB" id="7EMF"/>
    </source>
</evidence>
<sequence length="233" mass="27245">MGEPQQVSALPPPPMQYIKEYTDENIQEGLAPKPPPPIKDSYMMFGNQFQCDDLIIRPLESQGIERLHPMQFDHKKELRKLNMSILINFLDLLDILIRSPGSIKREEKLEDLKLLFVHVHHLINEYRPHQARETLRVMMEVQKRQRLETAERFQKHLERVIEMIQNCLASLPDDLPHSEAGMRVKTEPMDADDSNNCTGQNEHQRENSGHRRDQIIEKDAALCVLIDEMNERP</sequence>
<keyword id="KW-0002">3D-structure</keyword>
<keyword id="KW-0010">Activator</keyword>
<keyword id="KW-0903">Direct protein sequencing</keyword>
<keyword id="KW-1017">Isopeptide bond</keyword>
<keyword id="KW-0539">Nucleus</keyword>
<keyword id="KW-0597">Phosphoprotein</keyword>
<keyword id="KW-1267">Proteomics identification</keyword>
<keyword id="KW-1185">Reference proteome</keyword>
<keyword id="KW-0804">Transcription</keyword>
<keyword id="KW-0805">Transcription regulation</keyword>
<keyword id="KW-0832">Ubl conjugation</keyword>
<gene>
    <name type="primary">MED7</name>
    <name type="synonym">ARC34</name>
    <name type="synonym">CRSP9</name>
</gene>